<organism>
    <name type="scientific">Crotalus adamanteus</name>
    <name type="common">Eastern diamondback rattlesnake</name>
    <dbReference type="NCBI Taxonomy" id="8729"/>
    <lineage>
        <taxon>Eukaryota</taxon>
        <taxon>Metazoa</taxon>
        <taxon>Chordata</taxon>
        <taxon>Craniata</taxon>
        <taxon>Vertebrata</taxon>
        <taxon>Euteleostomi</taxon>
        <taxon>Lepidosauria</taxon>
        <taxon>Squamata</taxon>
        <taxon>Bifurcata</taxon>
        <taxon>Unidentata</taxon>
        <taxon>Episquamata</taxon>
        <taxon>Toxicofera</taxon>
        <taxon>Serpentes</taxon>
        <taxon>Colubroidea</taxon>
        <taxon>Viperidae</taxon>
        <taxon>Crotalinae</taxon>
        <taxon>Crotalus</taxon>
    </lineage>
</organism>
<feature type="signal peptide" evidence="2">
    <location>
        <begin position="1"/>
        <end position="20"/>
    </location>
</feature>
<feature type="propeptide" id="PRO_0000425625" evidence="1">
    <location>
        <begin position="21"/>
        <end position="189"/>
    </location>
</feature>
<feature type="chain" id="PRO_0000425626" description="Zinc metalloproteinase-disintegrin-like 2d">
    <location>
        <begin position="190"/>
        <end position="612"/>
    </location>
</feature>
<feature type="domain" description="Peptidase M12B" evidence="4">
    <location>
        <begin position="199"/>
        <end position="395"/>
    </location>
</feature>
<feature type="domain" description="Disintegrin" evidence="3">
    <location>
        <begin position="403"/>
        <end position="489"/>
    </location>
</feature>
<feature type="short sequence motif" description="D/ECD-tripeptide">
    <location>
        <begin position="467"/>
        <end position="469"/>
    </location>
</feature>
<feature type="active site" evidence="4">
    <location>
        <position position="336"/>
    </location>
</feature>
<feature type="binding site" evidence="1">
    <location>
        <position position="202"/>
    </location>
    <ligand>
        <name>Ca(2+)</name>
        <dbReference type="ChEBI" id="CHEBI:29108"/>
        <label>1</label>
    </ligand>
</feature>
<feature type="binding site" evidence="1">
    <location>
        <position position="286"/>
    </location>
    <ligand>
        <name>Ca(2+)</name>
        <dbReference type="ChEBI" id="CHEBI:29108"/>
        <label>1</label>
    </ligand>
</feature>
<feature type="binding site" evidence="4">
    <location>
        <position position="335"/>
    </location>
    <ligand>
        <name>Zn(2+)</name>
        <dbReference type="ChEBI" id="CHEBI:29105"/>
        <note>catalytic</note>
    </ligand>
</feature>
<feature type="binding site" evidence="4">
    <location>
        <position position="339"/>
    </location>
    <ligand>
        <name>Zn(2+)</name>
        <dbReference type="ChEBI" id="CHEBI:29105"/>
        <note>catalytic</note>
    </ligand>
</feature>
<feature type="binding site" evidence="4">
    <location>
        <position position="345"/>
    </location>
    <ligand>
        <name>Zn(2+)</name>
        <dbReference type="ChEBI" id="CHEBI:29105"/>
        <note>catalytic</note>
    </ligand>
</feature>
<feature type="binding site" evidence="1">
    <location>
        <position position="390"/>
    </location>
    <ligand>
        <name>Ca(2+)</name>
        <dbReference type="ChEBI" id="CHEBI:29108"/>
        <label>1</label>
    </ligand>
</feature>
<feature type="binding site" evidence="1">
    <location>
        <position position="393"/>
    </location>
    <ligand>
        <name>Ca(2+)</name>
        <dbReference type="ChEBI" id="CHEBI:29108"/>
        <label>1</label>
    </ligand>
</feature>
<feature type="binding site" evidence="1">
    <location>
        <position position="405"/>
    </location>
    <ligand>
        <name>Ca(2+)</name>
        <dbReference type="ChEBI" id="CHEBI:29108"/>
        <label>2</label>
    </ligand>
</feature>
<feature type="binding site" evidence="1">
    <location>
        <position position="408"/>
    </location>
    <ligand>
        <name>Ca(2+)</name>
        <dbReference type="ChEBI" id="CHEBI:29108"/>
        <label>2</label>
    </ligand>
</feature>
<feature type="binding site" evidence="1">
    <location>
        <position position="410"/>
    </location>
    <ligand>
        <name>Ca(2+)</name>
        <dbReference type="ChEBI" id="CHEBI:29108"/>
        <label>2</label>
    </ligand>
</feature>
<feature type="binding site" evidence="1">
    <location>
        <position position="412"/>
    </location>
    <ligand>
        <name>Ca(2+)</name>
        <dbReference type="ChEBI" id="CHEBI:29108"/>
        <label>2</label>
    </ligand>
</feature>
<feature type="binding site" evidence="1">
    <location>
        <position position="415"/>
    </location>
    <ligand>
        <name>Ca(2+)</name>
        <dbReference type="ChEBI" id="CHEBI:29108"/>
        <label>2</label>
    </ligand>
</feature>
<feature type="binding site" evidence="1">
    <location>
        <position position="418"/>
    </location>
    <ligand>
        <name>Ca(2+)</name>
        <dbReference type="ChEBI" id="CHEBI:29108"/>
        <label>2</label>
    </ligand>
</feature>
<feature type="glycosylation site" description="N-linked (GlcNAc...) asparagine" evidence="2">
    <location>
        <position position="218"/>
    </location>
</feature>
<feature type="disulfide bond" evidence="1">
    <location>
        <begin position="310"/>
        <end position="390"/>
    </location>
</feature>
<feature type="disulfide bond" evidence="1">
    <location>
        <begin position="350"/>
        <end position="374"/>
    </location>
</feature>
<feature type="disulfide bond" evidence="1">
    <location>
        <begin position="352"/>
        <end position="357"/>
    </location>
</feature>
<feature type="disulfide bond" evidence="1">
    <location>
        <begin position="406"/>
        <end position="435"/>
    </location>
</feature>
<feature type="disulfide bond" evidence="1">
    <location>
        <begin position="417"/>
        <end position="430"/>
    </location>
</feature>
<feature type="disulfide bond" evidence="1">
    <location>
        <begin position="419"/>
        <end position="425"/>
    </location>
</feature>
<feature type="disulfide bond" evidence="1">
    <location>
        <begin position="429"/>
        <end position="452"/>
    </location>
</feature>
<feature type="disulfide bond" evidence="1">
    <location>
        <begin position="443"/>
        <end position="449"/>
    </location>
</feature>
<feature type="disulfide bond" evidence="1">
    <location>
        <begin position="448"/>
        <end position="474"/>
    </location>
</feature>
<feature type="disulfide bond" evidence="1">
    <location>
        <begin position="461"/>
        <end position="481"/>
    </location>
</feature>
<feature type="disulfide bond" evidence="1">
    <location>
        <begin position="468"/>
        <end position="500"/>
    </location>
</feature>
<feature type="disulfide bond" evidence="1">
    <location>
        <begin position="493"/>
        <end position="505"/>
    </location>
</feature>
<feature type="disulfide bond" evidence="1">
    <location>
        <begin position="512"/>
        <end position="562"/>
    </location>
</feature>
<feature type="disulfide bond" evidence="1">
    <location>
        <begin position="527"/>
        <end position="573"/>
    </location>
</feature>
<feature type="disulfide bond" evidence="1">
    <location>
        <begin position="540"/>
        <end position="550"/>
    </location>
</feature>
<feature type="disulfide bond" evidence="1">
    <location>
        <begin position="557"/>
        <end position="599"/>
    </location>
</feature>
<feature type="disulfide bond" evidence="1">
    <location>
        <begin position="593"/>
        <end position="605"/>
    </location>
</feature>
<proteinExistence type="evidence at protein level"/>
<keyword id="KW-0106">Calcium</keyword>
<keyword id="KW-1217">Cell adhesion impairing toxin</keyword>
<keyword id="KW-0903">Direct protein sequencing</keyword>
<keyword id="KW-1015">Disulfide bond</keyword>
<keyword id="KW-0325">Glycoprotein</keyword>
<keyword id="KW-1199">Hemostasis impairing toxin</keyword>
<keyword id="KW-0378">Hydrolase</keyword>
<keyword id="KW-0479">Metal-binding</keyword>
<keyword id="KW-0482">Metalloprotease</keyword>
<keyword id="KW-0645">Protease</keyword>
<keyword id="KW-0964">Secreted</keyword>
<keyword id="KW-0732">Signal</keyword>
<keyword id="KW-0800">Toxin</keyword>
<keyword id="KW-0862">Zinc</keyword>
<keyword id="KW-0865">Zymogen</keyword>
<protein>
    <recommendedName>
        <fullName>Zinc metalloproteinase-disintegrin-like 2d</fullName>
        <ecNumber>3.4.24.-</ecNumber>
    </recommendedName>
    <alternativeName>
        <fullName>Snake venom metalloproteinase</fullName>
        <shortName>SVMP</shortName>
    </alternativeName>
</protein>
<evidence type="ECO:0000250" key="1"/>
<evidence type="ECO:0000255" key="2"/>
<evidence type="ECO:0000255" key="3">
    <source>
        <dbReference type="PROSITE-ProRule" id="PRU00068"/>
    </source>
</evidence>
<evidence type="ECO:0000255" key="4">
    <source>
        <dbReference type="PROSITE-ProRule" id="PRU00276"/>
    </source>
</evidence>
<evidence type="ECO:0000305" key="5"/>
<comment type="function">
    <text evidence="1">Snake venom metalloproteinase that impairs hemostasis in the envenomed animal.</text>
</comment>
<comment type="cofactor">
    <cofactor evidence="1">
        <name>Zn(2+)</name>
        <dbReference type="ChEBI" id="CHEBI:29105"/>
    </cofactor>
    <text evidence="1">Binds 1 zinc ion per subunit.</text>
</comment>
<comment type="subcellular location">
    <subcellularLocation>
        <location>Secreted</location>
    </subcellularLocation>
</comment>
<comment type="tissue specificity">
    <text>Expressed by the venom gland.</text>
</comment>
<comment type="miscellaneous">
    <text>The disintegrin domain belongs to the long disintegrin subfamily.</text>
</comment>
<comment type="similarity">
    <text evidence="5">Belongs to the venom metalloproteinase (M12B) family. P-III subfamily.</text>
</comment>
<sequence>MIQVLLVTICLAVFPYQGSSIILGSGNVNDYEVVYPRKVTALPKGAAQPKYEDTMQYEFKVNGEPVVLHLEKNKGLFSEDYSETHYSPDGREITTYPPVEDHCYYHGRIQNDADSTASISACNGLKGHFKLQGEMYLIEPLELSDSEAHAVFKYENVEKEDEAPKMCGVTQNWESYEPIKKASQLNLTPEQQRYLNTKKYIELVIVADNVMVKKYTSNSTAIRTRIYACVNTLNLIYRAFNIHIALVGIEIWSNKDLINVISASNVTLDLFGNWRRRVLLRRKRHDNAQLLTAIDLDGPTIGLARVGSMCDPKCSTGIVQDHSKLDVMVAVTMAHELAHNLGINHDGNQCNCGGNPCIMSATLNFEPAYRFSDCSRDEHWRYLIDNRPPCILNKPLITDIVSPPVCGNYFVEVGEECDCGLPAHCQNPCCNAATCKLRPGTQCEDGECCEQCQFTSAGTECRAAKSECDIAESCTGQSADCPTDNFQRNGRPCLNNNGYCYNGKCPTLDHQCISFFGSSATVAPDVCFNLNLKGEGNFYCRRENTRIFPCAPQDKKCGRLFCVLGPTGNTISCQATSSQSNVDIGMVDLGTKCGDGRVCNSNRQCVDVNTAY</sequence>
<accession>J3SDW6</accession>
<dbReference type="EC" id="3.4.24.-"/>
<dbReference type="EMBL" id="JU173710">
    <property type="protein sequence ID" value="AFJ49236.1"/>
    <property type="molecule type" value="mRNA"/>
</dbReference>
<dbReference type="SMR" id="J3SDW6"/>
<dbReference type="GO" id="GO:0005576">
    <property type="term" value="C:extracellular region"/>
    <property type="evidence" value="ECO:0007669"/>
    <property type="project" value="UniProtKB-SubCell"/>
</dbReference>
<dbReference type="GO" id="GO:0005886">
    <property type="term" value="C:plasma membrane"/>
    <property type="evidence" value="ECO:0007669"/>
    <property type="project" value="TreeGrafter"/>
</dbReference>
<dbReference type="GO" id="GO:0046872">
    <property type="term" value="F:metal ion binding"/>
    <property type="evidence" value="ECO:0007669"/>
    <property type="project" value="UniProtKB-KW"/>
</dbReference>
<dbReference type="GO" id="GO:0004222">
    <property type="term" value="F:metalloendopeptidase activity"/>
    <property type="evidence" value="ECO:0007669"/>
    <property type="project" value="InterPro"/>
</dbReference>
<dbReference type="GO" id="GO:0090729">
    <property type="term" value="F:toxin activity"/>
    <property type="evidence" value="ECO:0007669"/>
    <property type="project" value="UniProtKB-KW"/>
</dbReference>
<dbReference type="GO" id="GO:0006508">
    <property type="term" value="P:proteolysis"/>
    <property type="evidence" value="ECO:0007669"/>
    <property type="project" value="UniProtKB-KW"/>
</dbReference>
<dbReference type="CDD" id="cd04269">
    <property type="entry name" value="ZnMc_adamalysin_II_like"/>
    <property type="match status" value="1"/>
</dbReference>
<dbReference type="FunFam" id="3.40.390.10:FF:000002">
    <property type="entry name" value="Disintegrin and metalloproteinase domain-containing protein 22"/>
    <property type="match status" value="1"/>
</dbReference>
<dbReference type="FunFam" id="4.10.70.10:FF:000001">
    <property type="entry name" value="Disintegrin and metalloproteinase domain-containing protein 22"/>
    <property type="match status" value="1"/>
</dbReference>
<dbReference type="Gene3D" id="3.40.390.10">
    <property type="entry name" value="Collagenase (Catalytic Domain)"/>
    <property type="match status" value="1"/>
</dbReference>
<dbReference type="Gene3D" id="4.10.70.10">
    <property type="entry name" value="Disintegrin domain"/>
    <property type="match status" value="1"/>
</dbReference>
<dbReference type="InterPro" id="IPR006586">
    <property type="entry name" value="ADAM_Cys-rich"/>
</dbReference>
<dbReference type="InterPro" id="IPR018358">
    <property type="entry name" value="Disintegrin_CS"/>
</dbReference>
<dbReference type="InterPro" id="IPR001762">
    <property type="entry name" value="Disintegrin_dom"/>
</dbReference>
<dbReference type="InterPro" id="IPR036436">
    <property type="entry name" value="Disintegrin_dom_sf"/>
</dbReference>
<dbReference type="InterPro" id="IPR024079">
    <property type="entry name" value="MetalloPept_cat_dom_sf"/>
</dbReference>
<dbReference type="InterPro" id="IPR001590">
    <property type="entry name" value="Peptidase_M12B"/>
</dbReference>
<dbReference type="InterPro" id="IPR002870">
    <property type="entry name" value="Peptidase_M12B_N"/>
</dbReference>
<dbReference type="InterPro" id="IPR034027">
    <property type="entry name" value="Reprolysin_adamalysin"/>
</dbReference>
<dbReference type="PANTHER" id="PTHR11905">
    <property type="entry name" value="ADAM A DISINTEGRIN AND METALLOPROTEASE DOMAIN"/>
    <property type="match status" value="1"/>
</dbReference>
<dbReference type="PANTHER" id="PTHR11905:SF32">
    <property type="entry name" value="DISINTEGRIN AND METALLOPROTEINASE DOMAIN-CONTAINING PROTEIN 28"/>
    <property type="match status" value="1"/>
</dbReference>
<dbReference type="Pfam" id="PF08516">
    <property type="entry name" value="ADAM_CR"/>
    <property type="match status" value="1"/>
</dbReference>
<dbReference type="Pfam" id="PF00200">
    <property type="entry name" value="Disintegrin"/>
    <property type="match status" value="1"/>
</dbReference>
<dbReference type="Pfam" id="PF01562">
    <property type="entry name" value="Pep_M12B_propep"/>
    <property type="match status" value="1"/>
</dbReference>
<dbReference type="Pfam" id="PF01421">
    <property type="entry name" value="Reprolysin"/>
    <property type="match status" value="1"/>
</dbReference>
<dbReference type="PRINTS" id="PR00289">
    <property type="entry name" value="DISINTEGRIN"/>
</dbReference>
<dbReference type="SMART" id="SM00608">
    <property type="entry name" value="ACR"/>
    <property type="match status" value="1"/>
</dbReference>
<dbReference type="SMART" id="SM00050">
    <property type="entry name" value="DISIN"/>
    <property type="match status" value="1"/>
</dbReference>
<dbReference type="SUPFAM" id="SSF57552">
    <property type="entry name" value="Blood coagulation inhibitor (disintegrin)"/>
    <property type="match status" value="1"/>
</dbReference>
<dbReference type="SUPFAM" id="SSF55486">
    <property type="entry name" value="Metalloproteases ('zincins'), catalytic domain"/>
    <property type="match status" value="1"/>
</dbReference>
<dbReference type="PROSITE" id="PS50215">
    <property type="entry name" value="ADAM_MEPRO"/>
    <property type="match status" value="1"/>
</dbReference>
<dbReference type="PROSITE" id="PS00427">
    <property type="entry name" value="DISINTEGRIN_1"/>
    <property type="match status" value="1"/>
</dbReference>
<dbReference type="PROSITE" id="PS50214">
    <property type="entry name" value="DISINTEGRIN_2"/>
    <property type="match status" value="1"/>
</dbReference>
<dbReference type="PROSITE" id="PS00142">
    <property type="entry name" value="ZINC_PROTEASE"/>
    <property type="match status" value="1"/>
</dbReference>
<reference key="1">
    <citation type="journal article" date="2012" name="BMC Genomics">
        <title>The venom-gland transcriptome of the eastern diamondback rattlesnake (Crotalus adamanteus).</title>
        <authorList>
            <person name="Rokyta D.R."/>
            <person name="Lemmon A.R."/>
            <person name="Margres M.J."/>
            <person name="Aronow K."/>
        </authorList>
    </citation>
    <scope>NUCLEOTIDE SEQUENCE [MRNA]</scope>
    <source>
        <tissue>Venom gland</tissue>
    </source>
</reference>
<reference key="2">
    <citation type="journal article" date="2014" name="J. Proteomics">
        <title>Linking the transcriptome and proteome to characterize the venom of the eastern diamondback rattlesnake (Crotalus adamanteus).</title>
        <authorList>
            <person name="Margres M.J."/>
            <person name="McGivern J.J."/>
            <person name="Wray K.P."/>
            <person name="Seavy M."/>
            <person name="Calvin K."/>
            <person name="Rokyta D.R."/>
        </authorList>
    </citation>
    <scope>PROTEIN SEQUENCE OF 559-579</scope>
    <scope>IDENTIFICATION BY MASS SPECTROMETRY</scope>
    <source>
        <tissue>Venom</tissue>
    </source>
</reference>
<name>VM32D_CROAD</name>